<keyword id="KW-0007">Acetylation</keyword>
<keyword id="KW-0440">LIM domain</keyword>
<keyword id="KW-0479">Metal-binding</keyword>
<keyword id="KW-0597">Phosphoprotein</keyword>
<keyword id="KW-1185">Reference proteome</keyword>
<keyword id="KW-0677">Repeat</keyword>
<keyword id="KW-0862">Zinc</keyword>
<dbReference type="EMBL" id="BC118323">
    <property type="protein sequence ID" value="AAI18324.1"/>
    <property type="molecule type" value="mRNA"/>
</dbReference>
<dbReference type="RefSeq" id="NP_001073117.1">
    <property type="nucleotide sequence ID" value="NM_001079649.1"/>
</dbReference>
<dbReference type="FunCoup" id="Q0VFX8">
    <property type="interactions" value="303"/>
</dbReference>
<dbReference type="PaxDb" id="9913-ENSBTAP00000054586"/>
<dbReference type="PeptideAtlas" id="Q0VFX8"/>
<dbReference type="GeneID" id="780821"/>
<dbReference type="KEGG" id="bta:780821"/>
<dbReference type="CTD" id="1397"/>
<dbReference type="InParanoid" id="Q0VFX8"/>
<dbReference type="OrthoDB" id="1679758at2759"/>
<dbReference type="Proteomes" id="UP000009136">
    <property type="component" value="Unplaced"/>
</dbReference>
<dbReference type="GO" id="GO:0046872">
    <property type="term" value="F:metal ion binding"/>
    <property type="evidence" value="ECO:0007669"/>
    <property type="project" value="UniProtKB-KW"/>
</dbReference>
<dbReference type="CDD" id="cd09476">
    <property type="entry name" value="LIM1_TLP"/>
    <property type="match status" value="1"/>
</dbReference>
<dbReference type="CDD" id="cd09478">
    <property type="entry name" value="LIM_CRIP"/>
    <property type="match status" value="1"/>
</dbReference>
<dbReference type="FunFam" id="2.10.110.10:FF:000025">
    <property type="entry name" value="Cysteine-rich protein 2"/>
    <property type="match status" value="2"/>
</dbReference>
<dbReference type="Gene3D" id="2.10.110.10">
    <property type="entry name" value="Cysteine Rich Protein"/>
    <property type="match status" value="2"/>
</dbReference>
<dbReference type="InterPro" id="IPR001781">
    <property type="entry name" value="Znf_LIM"/>
</dbReference>
<dbReference type="PANTHER" id="PTHR46074:SF2">
    <property type="entry name" value="CYSTEINE-RICH PROTEIN 2"/>
    <property type="match status" value="1"/>
</dbReference>
<dbReference type="PANTHER" id="PTHR46074">
    <property type="entry name" value="CYSTEINE-RICH PROTEIN CRIP FAMILY MEMBER"/>
    <property type="match status" value="1"/>
</dbReference>
<dbReference type="Pfam" id="PF00412">
    <property type="entry name" value="LIM"/>
    <property type="match status" value="2"/>
</dbReference>
<dbReference type="SMART" id="SM00132">
    <property type="entry name" value="LIM"/>
    <property type="match status" value="2"/>
</dbReference>
<dbReference type="SUPFAM" id="SSF57716">
    <property type="entry name" value="Glucocorticoid receptor-like (DNA-binding domain)"/>
    <property type="match status" value="4"/>
</dbReference>
<dbReference type="PROSITE" id="PS00478">
    <property type="entry name" value="LIM_DOMAIN_1"/>
    <property type="match status" value="2"/>
</dbReference>
<dbReference type="PROSITE" id="PS50023">
    <property type="entry name" value="LIM_DOMAIN_2"/>
    <property type="match status" value="2"/>
</dbReference>
<feature type="chain" id="PRO_0000265103" description="Cysteine-rich protein 2">
    <location>
        <begin position="1"/>
        <end position="208"/>
    </location>
</feature>
<feature type="domain" description="LIM zinc-binding 1" evidence="4">
    <location>
        <begin position="5"/>
        <end position="57"/>
    </location>
</feature>
<feature type="domain" description="LIM zinc-binding 2" evidence="4">
    <location>
        <begin position="126"/>
        <end position="178"/>
    </location>
</feature>
<feature type="region of interest" description="Disordered" evidence="5">
    <location>
        <begin position="98"/>
        <end position="117"/>
    </location>
</feature>
<feature type="compositionally biased region" description="Low complexity" evidence="5">
    <location>
        <begin position="104"/>
        <end position="115"/>
    </location>
</feature>
<feature type="modified residue" description="N6-acetyllysine" evidence="3">
    <location>
        <position position="23"/>
    </location>
</feature>
<feature type="modified residue" description="Phosphoserine" evidence="2">
    <location>
        <position position="104"/>
    </location>
</feature>
<feature type="modified residue" description="N6-acetyllysine" evidence="2">
    <location>
        <position position="138"/>
    </location>
</feature>
<feature type="modified residue" description="N6-acetyllysine" evidence="3">
    <location>
        <position position="144"/>
    </location>
</feature>
<reference key="1">
    <citation type="submission" date="2006-06" db="EMBL/GenBank/DDBJ databases">
        <authorList>
            <consortium name="NIH - Mammalian Gene Collection (MGC) project"/>
        </authorList>
    </citation>
    <scope>NUCLEOTIDE SEQUENCE [LARGE SCALE MRNA]</scope>
    <source>
        <strain>Hereford</strain>
        <tissue>Fetal muscle</tissue>
    </source>
</reference>
<proteinExistence type="evidence at transcript level"/>
<protein>
    <recommendedName>
        <fullName>Cysteine-rich protein 2</fullName>
        <shortName>CRP-2</shortName>
    </recommendedName>
</protein>
<accession>Q0VFX8</accession>
<evidence type="ECO:0000250" key="1"/>
<evidence type="ECO:0000250" key="2">
    <source>
        <dbReference type="UniProtKB" id="P52943"/>
    </source>
</evidence>
<evidence type="ECO:0000250" key="3">
    <source>
        <dbReference type="UniProtKB" id="Q9DCT8"/>
    </source>
</evidence>
<evidence type="ECO:0000255" key="4">
    <source>
        <dbReference type="PROSITE-ProRule" id="PRU00125"/>
    </source>
</evidence>
<evidence type="ECO:0000256" key="5">
    <source>
        <dbReference type="SAM" id="MobiDB-lite"/>
    </source>
</evidence>
<name>CRIP2_BOVIN</name>
<sequence>MASKCPKCDKTVYFAEKVSSLGKDWHRFCLRCEHCSKTLTPGGHAEHDGKPFCHKPCYATLFGPKGVNIGGAGSYIYEKPSAEKPQVTGPIEVPVARTEERKASGPPKGPSKASSVTTFTGEPNMCPRCNKRVYFAEKVTSLGKDWHRPCLRCERCGKTLTPGGHAEHDGQPYCHKPCYGILFGPKGVNTGAVGSYIYDKDPEGKAQP</sequence>
<gene>
    <name type="primary">CRIP2</name>
</gene>
<comment type="subunit">
    <text evidence="1">Interacts with TGFB1I1.</text>
</comment>
<organism>
    <name type="scientific">Bos taurus</name>
    <name type="common">Bovine</name>
    <dbReference type="NCBI Taxonomy" id="9913"/>
    <lineage>
        <taxon>Eukaryota</taxon>
        <taxon>Metazoa</taxon>
        <taxon>Chordata</taxon>
        <taxon>Craniata</taxon>
        <taxon>Vertebrata</taxon>
        <taxon>Euteleostomi</taxon>
        <taxon>Mammalia</taxon>
        <taxon>Eutheria</taxon>
        <taxon>Laurasiatheria</taxon>
        <taxon>Artiodactyla</taxon>
        <taxon>Ruminantia</taxon>
        <taxon>Pecora</taxon>
        <taxon>Bovidae</taxon>
        <taxon>Bovinae</taxon>
        <taxon>Bos</taxon>
    </lineage>
</organism>